<dbReference type="EMBL" id="AY519520">
    <property type="protein sequence ID" value="AAS09990.1"/>
    <property type="molecule type" value="mRNA"/>
</dbReference>
<dbReference type="EMBL" id="FJ972635">
    <property type="protein sequence ID" value="ADC68265.1"/>
    <property type="molecule type" value="Genomic_DNA"/>
</dbReference>
<dbReference type="EMBL" id="FJ972636">
    <property type="protein sequence ID" value="ADC68266.1"/>
    <property type="molecule type" value="Genomic_DNA"/>
</dbReference>
<dbReference type="EMBL" id="FJ972639">
    <property type="protein sequence ID" value="ADC68269.1"/>
    <property type="molecule type" value="Genomic_DNA"/>
</dbReference>
<dbReference type="EMBL" id="FJ972640">
    <property type="protein sequence ID" value="ADC68270.1"/>
    <property type="molecule type" value="Genomic_DNA"/>
</dbReference>
<dbReference type="EMBL" id="FJ972646">
    <property type="protein sequence ID" value="ADC68276.1"/>
    <property type="molecule type" value="Genomic_DNA"/>
</dbReference>
<dbReference type="EMBL" id="FJ972648">
    <property type="protein sequence ID" value="ADC68278.1"/>
    <property type="molecule type" value="Genomic_DNA"/>
</dbReference>
<dbReference type="EMBL" id="FJ972649">
    <property type="protein sequence ID" value="ADC68279.1"/>
    <property type="molecule type" value="Genomic_DNA"/>
</dbReference>
<dbReference type="EMBL" id="FJ972651">
    <property type="protein sequence ID" value="ADC68281.1"/>
    <property type="molecule type" value="Genomic_DNA"/>
</dbReference>
<dbReference type="EMBL" id="FJ972652">
    <property type="protein sequence ID" value="ADC68282.1"/>
    <property type="molecule type" value="Genomic_DNA"/>
</dbReference>
<dbReference type="EMBL" id="FJ972653">
    <property type="protein sequence ID" value="ADC68283.1"/>
    <property type="molecule type" value="Genomic_DNA"/>
</dbReference>
<dbReference type="EMBL" id="AC002338">
    <property type="protein sequence ID" value="AAM14822.1"/>
    <property type="status" value="ALT_SEQ"/>
    <property type="molecule type" value="Genomic_DNA"/>
</dbReference>
<dbReference type="EMBL" id="U93215">
    <property type="protein sequence ID" value="AAB63092.1"/>
    <property type="status" value="ALT_SEQ"/>
    <property type="molecule type" value="Genomic_DNA"/>
</dbReference>
<dbReference type="EMBL" id="CP002685">
    <property type="protein sequence ID" value="AEC08385.1"/>
    <property type="molecule type" value="Genomic_DNA"/>
</dbReference>
<dbReference type="EMBL" id="AY234411">
    <property type="protein sequence ID" value="AAO92055.1"/>
    <property type="molecule type" value="mRNA"/>
</dbReference>
<dbReference type="EMBL" id="AY649255">
    <property type="protein sequence ID" value="AAT69172.1"/>
    <property type="molecule type" value="mRNA"/>
</dbReference>
<dbReference type="PIR" id="C84708">
    <property type="entry name" value="C84708"/>
</dbReference>
<dbReference type="RefSeq" id="NP_850145.1">
    <property type="nucleotide sequence ID" value="NM_179814.4"/>
</dbReference>
<dbReference type="SMR" id="Q84RD1"/>
<dbReference type="BioGRID" id="2942">
    <property type="interactions" value="11"/>
</dbReference>
<dbReference type="FunCoup" id="Q84RD1">
    <property type="interactions" value="33"/>
</dbReference>
<dbReference type="IntAct" id="Q84RD1">
    <property type="interactions" value="13"/>
</dbReference>
<dbReference type="STRING" id="3702.Q84RD1"/>
<dbReference type="PaxDb" id="3702-AT2G30420.1"/>
<dbReference type="EnsemblPlants" id="AT2G30420.1">
    <property type="protein sequence ID" value="AT2G30420.1"/>
    <property type="gene ID" value="AT2G30420"/>
</dbReference>
<dbReference type="GeneID" id="817593"/>
<dbReference type="Gramene" id="AT2G30420.1">
    <property type="protein sequence ID" value="AT2G30420.1"/>
    <property type="gene ID" value="AT2G30420"/>
</dbReference>
<dbReference type="KEGG" id="ath:AT2G30420"/>
<dbReference type="Araport" id="AT2G30420"/>
<dbReference type="TAIR" id="AT2G30420">
    <property type="gene designation" value="ETC2"/>
</dbReference>
<dbReference type="HOGENOM" id="CLU_178021_1_0_1"/>
<dbReference type="InParanoid" id="Q84RD1"/>
<dbReference type="OMA" id="SSMEWEF"/>
<dbReference type="PhylomeDB" id="Q84RD1"/>
<dbReference type="PRO" id="PR:Q84RD1"/>
<dbReference type="Proteomes" id="UP000006548">
    <property type="component" value="Chromosome 2"/>
</dbReference>
<dbReference type="ExpressionAtlas" id="Q84RD1">
    <property type="expression patterns" value="baseline and differential"/>
</dbReference>
<dbReference type="GO" id="GO:0005634">
    <property type="term" value="C:nucleus"/>
    <property type="evidence" value="ECO:0007669"/>
    <property type="project" value="UniProtKB-SubCell"/>
</dbReference>
<dbReference type="GO" id="GO:0003677">
    <property type="term" value="F:DNA binding"/>
    <property type="evidence" value="ECO:0007669"/>
    <property type="project" value="UniProtKB-KW"/>
</dbReference>
<dbReference type="GO" id="GO:0003700">
    <property type="term" value="F:DNA-binding transcription factor activity"/>
    <property type="evidence" value="ECO:0000250"/>
    <property type="project" value="TAIR"/>
</dbReference>
<dbReference type="GO" id="GO:1900033">
    <property type="term" value="P:negative regulation of trichome patterning"/>
    <property type="evidence" value="ECO:0000315"/>
    <property type="project" value="UniProtKB"/>
</dbReference>
<dbReference type="GO" id="GO:0006355">
    <property type="term" value="P:regulation of DNA-templated transcription"/>
    <property type="evidence" value="ECO:0000304"/>
    <property type="project" value="TAIR"/>
</dbReference>
<dbReference type="GO" id="GO:0080147">
    <property type="term" value="P:root hair cell development"/>
    <property type="evidence" value="ECO:0000315"/>
    <property type="project" value="UniProtKB"/>
</dbReference>
<dbReference type="GO" id="GO:0048629">
    <property type="term" value="P:trichome patterning"/>
    <property type="evidence" value="ECO:0000315"/>
    <property type="project" value="TAIR"/>
</dbReference>
<dbReference type="CDD" id="cd00167">
    <property type="entry name" value="SANT"/>
    <property type="match status" value="1"/>
</dbReference>
<dbReference type="FunFam" id="1.10.10.60:FF:000411">
    <property type="entry name" value="Transcription factor TRY"/>
    <property type="match status" value="1"/>
</dbReference>
<dbReference type="Gene3D" id="1.10.10.60">
    <property type="entry name" value="Homeodomain-like"/>
    <property type="match status" value="1"/>
</dbReference>
<dbReference type="InterPro" id="IPR009057">
    <property type="entry name" value="Homeodomain-like_sf"/>
</dbReference>
<dbReference type="InterPro" id="IPR015495">
    <property type="entry name" value="Myb_TF_plants"/>
</dbReference>
<dbReference type="InterPro" id="IPR001005">
    <property type="entry name" value="SANT/Myb"/>
</dbReference>
<dbReference type="PANTHER" id="PTHR47998:SF51">
    <property type="entry name" value="MYB-LIKE TRANSCRIPTION FACTOR ETC2-RELATED"/>
    <property type="match status" value="1"/>
</dbReference>
<dbReference type="PANTHER" id="PTHR47998">
    <property type="entry name" value="TRANSCRIPTION FACTOR MYB51-LIKE ISOFORM X1"/>
    <property type="match status" value="1"/>
</dbReference>
<dbReference type="Pfam" id="PF00249">
    <property type="entry name" value="Myb_DNA-binding"/>
    <property type="match status" value="1"/>
</dbReference>
<dbReference type="SMART" id="SM00717">
    <property type="entry name" value="SANT"/>
    <property type="match status" value="1"/>
</dbReference>
<dbReference type="SUPFAM" id="SSF46689">
    <property type="entry name" value="Homeodomain-like"/>
    <property type="match status" value="1"/>
</dbReference>
<accession>Q84RD1</accession>
<accession>O04349</accession>
<sequence>MDNTNRLRLRRGPSLRQTKFTRSRYDSEEVSSIEWEFISMTEQEEDLISRMYRLVGNRWDLIAGRVVGRKANEIERYWIMRNSDYFSHKRRRLNNSPFFSTSPLNLQENLKL</sequence>
<proteinExistence type="evidence at protein level"/>
<organism>
    <name type="scientific">Arabidopsis thaliana</name>
    <name type="common">Mouse-ear cress</name>
    <dbReference type="NCBI Taxonomy" id="3702"/>
    <lineage>
        <taxon>Eukaryota</taxon>
        <taxon>Viridiplantae</taxon>
        <taxon>Streptophyta</taxon>
        <taxon>Embryophyta</taxon>
        <taxon>Tracheophyta</taxon>
        <taxon>Spermatophyta</taxon>
        <taxon>Magnoliopsida</taxon>
        <taxon>eudicotyledons</taxon>
        <taxon>Gunneridae</taxon>
        <taxon>Pentapetalae</taxon>
        <taxon>rosids</taxon>
        <taxon>malvids</taxon>
        <taxon>Brassicales</taxon>
        <taxon>Brassicaceae</taxon>
        <taxon>Camelineae</taxon>
        <taxon>Arabidopsis</taxon>
    </lineage>
</organism>
<protein>
    <recommendedName>
        <fullName>MYB-like transcription factor ETC2</fullName>
    </recommendedName>
    <alternativeName>
        <fullName>Protein ENHANCER OF TRY AND CPC 2</fullName>
    </alternativeName>
</protein>
<evidence type="ECO:0000250" key="1"/>
<evidence type="ECO:0000269" key="2">
    <source>
    </source>
</evidence>
<evidence type="ECO:0000269" key="3">
    <source>
    </source>
</evidence>
<evidence type="ECO:0000305" key="4"/>
<evidence type="ECO:0000305" key="5">
    <source>
    </source>
</evidence>
<evidence type="ECO:0000305" key="6">
    <source>
    </source>
</evidence>
<feature type="chain" id="PRO_0000423053" description="MYB-like transcription factor ETC2">
    <location>
        <begin position="1"/>
        <end position="112"/>
    </location>
</feature>
<feature type="domain" description="Myb-like">
    <location>
        <begin position="41"/>
        <end position="78"/>
    </location>
</feature>
<keyword id="KW-0217">Developmental protein</keyword>
<keyword id="KW-0238">DNA-binding</keyword>
<keyword id="KW-0539">Nucleus</keyword>
<keyword id="KW-1185">Reference proteome</keyword>
<keyword id="KW-0804">Transcription</keyword>
<keyword id="KW-0805">Transcription regulation</keyword>
<name>ETC2_ARATH</name>
<gene>
    <name type="primary">ETC2</name>
    <name type="ordered locus">At2g30420</name>
    <name type="ORF">T6B20</name>
    <name type="ORF">T9D9</name>
</gene>
<comment type="function">
    <text evidence="2 3">MYB-type transcription factor involved in epidermal cell fate specification. Acts as a negative regulator of trichome development, by mediating lateral inhibition. Promotes the formation of hair developing cells in H position in root epidermis, probably by inhibiting non-hair cell formation.</text>
</comment>
<comment type="subunit">
    <text evidence="2">Interacts with GL3.</text>
</comment>
<comment type="subcellular location">
    <subcellularLocation>
        <location evidence="1">Nucleus</location>
    </subcellularLocation>
</comment>
<comment type="tissue specificity">
    <text evidence="2">Expressed in stomatal guard mother cells, young stomata and trichomes of young leaves, and inflorescences.</text>
</comment>
<comment type="miscellaneous">
    <text evidence="5 6">Overexpression of ETC2 results in the suppression of trichomes and overproduction of root hairs, as observed for CPC, TRY, ETC1 and ETC3 (PubMed:15604688). In natural Arabidopsis populations the single amino acid substitution of Lys-19 to Glu might affect the stability of the ETC2 repressor and causes reduced trichome number (PubMed:19818620).</text>
</comment>
<comment type="sequence caution" evidence="4">
    <conflict type="erroneous gene model prediction">
        <sequence resource="EMBL-CDS" id="AAB63092"/>
    </conflict>
</comment>
<comment type="sequence caution" evidence="4">
    <conflict type="erroneous gene model prediction">
        <sequence resource="EMBL-CDS" id="AAM14822"/>
    </conflict>
</comment>
<reference key="1">
    <citation type="journal article" date="2009" name="Curr. Biol.">
        <title>A single amino acid replacement in ETC2 shapes trichome patterning in natural Arabidopsis populations.</title>
        <authorList>
            <person name="Hilscher J."/>
            <person name="Schlotterer C."/>
            <person name="Hauser M.T."/>
        </authorList>
    </citation>
    <scope>NUCLEOTIDE SEQUENCE [GENOMIC DNA]</scope>
    <scope>FUNCTION</scope>
    <source>
        <strain>cv. Columbia</strain>
        <strain>cv. Edi-0</strain>
        <strain>cv. Hi-0</strain>
        <strain>cv. Ita</strain>
        <strain>cv. Lim</strain>
        <strain>cv. Mh-0</strain>
        <strain>cv. Pog-0</strain>
        <strain>cv. Wassilewskija</strain>
    </source>
</reference>
<reference key="2">
    <citation type="submission" date="2004-01" db="EMBL/GenBank/DDBJ databases">
        <title>The MYB transcription factor family in Arabidopsis: a genome-wide cloning and expression pattern analysis.</title>
        <authorList>
            <person name="Qu L."/>
            <person name="Gu H."/>
        </authorList>
    </citation>
    <scope>NUCLEOTIDE SEQUENCE [MRNA]</scope>
</reference>
<reference key="3">
    <citation type="journal article" date="1999" name="Nature">
        <title>Sequence and analysis of chromosome 2 of the plant Arabidopsis thaliana.</title>
        <authorList>
            <person name="Lin X."/>
            <person name="Kaul S."/>
            <person name="Rounsley S.D."/>
            <person name="Shea T.P."/>
            <person name="Benito M.-I."/>
            <person name="Town C.D."/>
            <person name="Fujii C.Y."/>
            <person name="Mason T.M."/>
            <person name="Bowman C.L."/>
            <person name="Barnstead M.E."/>
            <person name="Feldblyum T.V."/>
            <person name="Buell C.R."/>
            <person name="Ketchum K.A."/>
            <person name="Lee J.J."/>
            <person name="Ronning C.M."/>
            <person name="Koo H.L."/>
            <person name="Moffat K.S."/>
            <person name="Cronin L.A."/>
            <person name="Shen M."/>
            <person name="Pai G."/>
            <person name="Van Aken S."/>
            <person name="Umayam L."/>
            <person name="Tallon L.J."/>
            <person name="Gill J.E."/>
            <person name="Adams M.D."/>
            <person name="Carrera A.J."/>
            <person name="Creasy T.H."/>
            <person name="Goodman H.M."/>
            <person name="Somerville C.R."/>
            <person name="Copenhaver G.P."/>
            <person name="Preuss D."/>
            <person name="Nierman W.C."/>
            <person name="White O."/>
            <person name="Eisen J.A."/>
            <person name="Salzberg S.L."/>
            <person name="Fraser C.M."/>
            <person name="Venter J.C."/>
        </authorList>
    </citation>
    <scope>NUCLEOTIDE SEQUENCE [LARGE SCALE GENOMIC DNA]</scope>
    <source>
        <strain>cv. Columbia</strain>
    </source>
</reference>
<reference key="4">
    <citation type="journal article" date="2017" name="Plant J.">
        <title>Araport11: a complete reannotation of the Arabidopsis thaliana reference genome.</title>
        <authorList>
            <person name="Cheng C.Y."/>
            <person name="Krishnakumar V."/>
            <person name="Chan A.P."/>
            <person name="Thibaud-Nissen F."/>
            <person name="Schobel S."/>
            <person name="Town C.D."/>
        </authorList>
    </citation>
    <scope>GENOME REANNOTATION</scope>
    <source>
        <strain>cv. Columbia</strain>
    </source>
</reference>
<reference key="5">
    <citation type="journal article" date="2002" name="Plant Physiol.">
        <title>Cloning and sequencing of cDNAs for hypothetical genes from chromosome 2 of Arabidopsis.</title>
        <authorList>
            <person name="Xiao Y.-L."/>
            <person name="Malik M."/>
            <person name="Whitelaw C.A."/>
            <person name="Town C.D."/>
        </authorList>
    </citation>
    <scope>NUCLEOTIDE SEQUENCE [LARGE SCALE MRNA]</scope>
    <source>
        <strain>cv. Columbia</strain>
    </source>
</reference>
<reference key="6">
    <citation type="submission" date="2004-06" db="EMBL/GenBank/DDBJ databases">
        <authorList>
            <person name="Underwood B.A."/>
            <person name="Xiao Y.-L."/>
            <person name="Moskal W.A. Jr."/>
            <person name="Monaghan E.L."/>
            <person name="Wang W."/>
            <person name="Redman J.C."/>
            <person name="Wu H.C."/>
            <person name="Utterback T."/>
            <person name="Town C.D."/>
        </authorList>
    </citation>
    <scope>NUCLEOTIDE SEQUENCE [LARGE SCALE MRNA]</scope>
    <source>
        <strain>cv. Columbia</strain>
    </source>
</reference>
<reference key="7">
    <citation type="journal article" date="2004" name="Plant Mol. Biol.">
        <title>ENHANCER of TRY and CPC 2 (ETC2) reveals redundancy in the region-specific control of trichome development of Arabidopsis.</title>
        <authorList>
            <person name="Kirik V."/>
            <person name="Simon M."/>
            <person name="Wester K."/>
            <person name="Schiefelbein J."/>
            <person name="Hulskamp M."/>
        </authorList>
    </citation>
    <scope>FUNCTION</scope>
    <scope>INTERACTION WITH GL3</scope>
    <scope>TISSUE SPECIFICITY</scope>
</reference>